<evidence type="ECO:0000255" key="1">
    <source>
        <dbReference type="HAMAP-Rule" id="MF_01725"/>
    </source>
</evidence>
<evidence type="ECO:0000256" key="2">
    <source>
        <dbReference type="SAM" id="MobiDB-lite"/>
    </source>
</evidence>
<comment type="function">
    <text evidence="1">Part of the ABC transporter complex ZnuABC involved in zinc import. Responsible for energy coupling to the transport system.</text>
</comment>
<comment type="catalytic activity">
    <reaction evidence="1">
        <text>Zn(2+)(out) + ATP(in) + H2O(in) = Zn(2+)(in) + ADP(in) + phosphate(in) + H(+)(in)</text>
        <dbReference type="Rhea" id="RHEA:29795"/>
        <dbReference type="ChEBI" id="CHEBI:15377"/>
        <dbReference type="ChEBI" id="CHEBI:15378"/>
        <dbReference type="ChEBI" id="CHEBI:29105"/>
        <dbReference type="ChEBI" id="CHEBI:30616"/>
        <dbReference type="ChEBI" id="CHEBI:43474"/>
        <dbReference type="ChEBI" id="CHEBI:456216"/>
        <dbReference type="EC" id="7.2.2.20"/>
    </reaction>
</comment>
<comment type="subunit">
    <text evidence="1">The complex is composed of two ATP-binding proteins (ZnuC), two transmembrane proteins (ZnuB) and a solute-binding protein (ZnuA).</text>
</comment>
<comment type="subcellular location">
    <subcellularLocation>
        <location evidence="1">Cell inner membrane</location>
        <topology evidence="1">Peripheral membrane protein</topology>
    </subcellularLocation>
</comment>
<comment type="similarity">
    <text evidence="1">Belongs to the ABC transporter superfamily. Zinc importer (TC 3.A.1.15.5) family.</text>
</comment>
<proteinExistence type="inferred from homology"/>
<keyword id="KW-0067">ATP-binding</keyword>
<keyword id="KW-0997">Cell inner membrane</keyword>
<keyword id="KW-1003">Cell membrane</keyword>
<keyword id="KW-0406">Ion transport</keyword>
<keyword id="KW-0472">Membrane</keyword>
<keyword id="KW-0547">Nucleotide-binding</keyword>
<keyword id="KW-1278">Translocase</keyword>
<keyword id="KW-0813">Transport</keyword>
<keyword id="KW-0862">Zinc</keyword>
<keyword id="KW-0864">Zinc transport</keyword>
<protein>
    <recommendedName>
        <fullName evidence="1">Zinc import ATP-binding protein ZnuC</fullName>
        <ecNumber evidence="1">7.2.2.20</ecNumber>
    </recommendedName>
</protein>
<name>ZNUC_BRUME</name>
<gene>
    <name evidence="1" type="primary">znuC</name>
    <name type="ordered locus">BMEII0177</name>
</gene>
<dbReference type="EC" id="7.2.2.20" evidence="1"/>
<dbReference type="EMBL" id="AE008918">
    <property type="protein sequence ID" value="AAL53418.1"/>
    <property type="molecule type" value="Genomic_DNA"/>
</dbReference>
<dbReference type="PIR" id="AG3531">
    <property type="entry name" value="AG3531"/>
</dbReference>
<dbReference type="RefSeq" id="WP_004680954.1">
    <property type="nucleotide sequence ID" value="NZ_GG703779.1"/>
</dbReference>
<dbReference type="SMR" id="Q8YDJ8"/>
<dbReference type="GeneID" id="29595304"/>
<dbReference type="KEGG" id="bme:BMEII0177"/>
<dbReference type="eggNOG" id="COG1121">
    <property type="taxonomic scope" value="Bacteria"/>
</dbReference>
<dbReference type="PRO" id="PR:Q8YDJ8"/>
<dbReference type="Proteomes" id="UP000000419">
    <property type="component" value="Chromosome II"/>
</dbReference>
<dbReference type="GO" id="GO:0005886">
    <property type="term" value="C:plasma membrane"/>
    <property type="evidence" value="ECO:0007669"/>
    <property type="project" value="UniProtKB-SubCell"/>
</dbReference>
<dbReference type="GO" id="GO:0015633">
    <property type="term" value="F:ABC-type zinc transporter activity"/>
    <property type="evidence" value="ECO:0007669"/>
    <property type="project" value="UniProtKB-EC"/>
</dbReference>
<dbReference type="GO" id="GO:0005524">
    <property type="term" value="F:ATP binding"/>
    <property type="evidence" value="ECO:0007669"/>
    <property type="project" value="UniProtKB-KW"/>
</dbReference>
<dbReference type="GO" id="GO:0016887">
    <property type="term" value="F:ATP hydrolysis activity"/>
    <property type="evidence" value="ECO:0007669"/>
    <property type="project" value="InterPro"/>
</dbReference>
<dbReference type="GO" id="GO:0010043">
    <property type="term" value="P:response to zinc ion"/>
    <property type="evidence" value="ECO:0007669"/>
    <property type="project" value="TreeGrafter"/>
</dbReference>
<dbReference type="Gene3D" id="3.40.50.300">
    <property type="entry name" value="P-loop containing nucleotide triphosphate hydrolases"/>
    <property type="match status" value="1"/>
</dbReference>
<dbReference type="InterPro" id="IPR003593">
    <property type="entry name" value="AAA+_ATPase"/>
</dbReference>
<dbReference type="InterPro" id="IPR003439">
    <property type="entry name" value="ABC_transporter-like_ATP-bd"/>
</dbReference>
<dbReference type="InterPro" id="IPR017871">
    <property type="entry name" value="ABC_transporter-like_CS"/>
</dbReference>
<dbReference type="InterPro" id="IPR050153">
    <property type="entry name" value="Metal_Ion_Import_ABC"/>
</dbReference>
<dbReference type="InterPro" id="IPR027417">
    <property type="entry name" value="P-loop_NTPase"/>
</dbReference>
<dbReference type="PANTHER" id="PTHR42734">
    <property type="entry name" value="METAL TRANSPORT SYSTEM ATP-BINDING PROTEIN TM_0124-RELATED"/>
    <property type="match status" value="1"/>
</dbReference>
<dbReference type="PANTHER" id="PTHR42734:SF9">
    <property type="entry name" value="ZINC IMPORT ATP-BINDING PROTEIN ZNUC"/>
    <property type="match status" value="1"/>
</dbReference>
<dbReference type="Pfam" id="PF00005">
    <property type="entry name" value="ABC_tran"/>
    <property type="match status" value="1"/>
</dbReference>
<dbReference type="SMART" id="SM00382">
    <property type="entry name" value="AAA"/>
    <property type="match status" value="1"/>
</dbReference>
<dbReference type="SUPFAM" id="SSF52540">
    <property type="entry name" value="P-loop containing nucleoside triphosphate hydrolases"/>
    <property type="match status" value="1"/>
</dbReference>
<dbReference type="PROSITE" id="PS00211">
    <property type="entry name" value="ABC_TRANSPORTER_1"/>
    <property type="match status" value="1"/>
</dbReference>
<dbReference type="PROSITE" id="PS50893">
    <property type="entry name" value="ABC_TRANSPORTER_2"/>
    <property type="match status" value="1"/>
</dbReference>
<dbReference type="PROSITE" id="PS51298">
    <property type="entry name" value="ZNUC"/>
    <property type="match status" value="1"/>
</dbReference>
<feature type="chain" id="PRO_0000281497" description="Zinc import ATP-binding protein ZnuC">
    <location>
        <begin position="1"/>
        <end position="298"/>
    </location>
</feature>
<feature type="domain" description="ABC transporter" evidence="1">
    <location>
        <begin position="17"/>
        <end position="232"/>
    </location>
</feature>
<feature type="region of interest" description="Disordered" evidence="2">
    <location>
        <begin position="273"/>
        <end position="298"/>
    </location>
</feature>
<feature type="compositionally biased region" description="Basic and acidic residues" evidence="2">
    <location>
        <begin position="276"/>
        <end position="298"/>
    </location>
</feature>
<feature type="binding site" evidence="1">
    <location>
        <begin position="49"/>
        <end position="56"/>
    </location>
    <ligand>
        <name>ATP</name>
        <dbReference type="ChEBI" id="CHEBI:30616"/>
    </ligand>
</feature>
<organism>
    <name type="scientific">Brucella melitensis biotype 1 (strain ATCC 23456 / CCUG 17765 / NCTC 10094 / 16M)</name>
    <dbReference type="NCBI Taxonomy" id="224914"/>
    <lineage>
        <taxon>Bacteria</taxon>
        <taxon>Pseudomonadati</taxon>
        <taxon>Pseudomonadota</taxon>
        <taxon>Alphaproteobacteria</taxon>
        <taxon>Hyphomicrobiales</taxon>
        <taxon>Brucellaceae</taxon>
        <taxon>Brucella/Ochrobactrum group</taxon>
        <taxon>Brucella</taxon>
    </lineage>
</organism>
<accession>Q8YDJ8</accession>
<sequence length="298" mass="32334">MDKKSSHPAGAARDILIELRNAGVYRDGRWLVRNVDLSVERGEIVTLIGQNGAGKSTAAKMALHILKPDEGMVSHKPGLRIGYVPQKINIDRTLPLSVERLMTLTGPLPRKEIDAALEAVGIAHLAKAETAHLSGGEFQRALMARALARKPDIMVLDEPVQGVDFSGEAALYELIARLRDDTSCGVLLISHDLHLVMAATDRVICLNGHVCCSGTPRDVTSSPEYVRLFGSRAVGPLAVYEHHHDHTHLPDGRVLYADGTTADPIAGSTMGPRGHCHVEDGHHHDHEHHHHEGGQPRA</sequence>
<reference key="1">
    <citation type="journal article" date="2002" name="Proc. Natl. Acad. Sci. U.S.A.">
        <title>The genome sequence of the facultative intracellular pathogen Brucella melitensis.</title>
        <authorList>
            <person name="DelVecchio V.G."/>
            <person name="Kapatral V."/>
            <person name="Redkar R.J."/>
            <person name="Patra G."/>
            <person name="Mujer C."/>
            <person name="Los T."/>
            <person name="Ivanova N."/>
            <person name="Anderson I."/>
            <person name="Bhattacharyya A."/>
            <person name="Lykidis A."/>
            <person name="Reznik G."/>
            <person name="Jablonski L."/>
            <person name="Larsen N."/>
            <person name="D'Souza M."/>
            <person name="Bernal A."/>
            <person name="Mazur M."/>
            <person name="Goltsman E."/>
            <person name="Selkov E."/>
            <person name="Elzer P.H."/>
            <person name="Hagius S."/>
            <person name="O'Callaghan D."/>
            <person name="Letesson J.-J."/>
            <person name="Haselkorn R."/>
            <person name="Kyrpides N.C."/>
            <person name="Overbeek R."/>
        </authorList>
    </citation>
    <scope>NUCLEOTIDE SEQUENCE [LARGE SCALE GENOMIC DNA]</scope>
    <source>
        <strain>ATCC 23456 / CCUG 17765 / NCTC 10094 / 16M</strain>
    </source>
</reference>